<feature type="chain" id="PRO_0000360778" description="Uncharacterized transcriptional regulatory protein YvfU">
    <location>
        <begin position="1"/>
        <end position="200"/>
    </location>
</feature>
<feature type="domain" description="Response regulatory" evidence="2">
    <location>
        <begin position="3"/>
        <end position="119"/>
    </location>
</feature>
<feature type="domain" description="HTH luxR-type" evidence="3">
    <location>
        <begin position="133"/>
        <end position="198"/>
    </location>
</feature>
<feature type="DNA-binding region" description="H-T-H motif" evidence="3">
    <location>
        <begin position="157"/>
        <end position="176"/>
    </location>
</feature>
<feature type="modified residue" description="4-aspartylphosphate" evidence="2">
    <location>
        <position position="54"/>
    </location>
</feature>
<accession>O07019</accession>
<accession>Q795K3</accession>
<gene>
    <name type="primary">yvfU</name>
    <name type="ordered locus">BSU34060</name>
</gene>
<comment type="function">
    <text evidence="4">Member of the two-component regulatory system YvfT/YvfU.</text>
</comment>
<comment type="subcellular location">
    <subcellularLocation>
        <location evidence="5">Cytoplasm</location>
    </subcellularLocation>
</comment>
<comment type="PTM">
    <text evidence="1">Phosphorylated by YvfT.</text>
</comment>
<name>YVFU_BACSU</name>
<reference key="1">
    <citation type="submission" date="1997-04" db="EMBL/GenBank/DDBJ databases">
        <authorList>
            <person name="Denizot F."/>
        </authorList>
    </citation>
    <scope>NUCLEOTIDE SEQUENCE [GENOMIC DNA]</scope>
    <source>
        <strain>168</strain>
    </source>
</reference>
<reference key="2">
    <citation type="journal article" date="1997" name="Nature">
        <title>The complete genome sequence of the Gram-positive bacterium Bacillus subtilis.</title>
        <authorList>
            <person name="Kunst F."/>
            <person name="Ogasawara N."/>
            <person name="Moszer I."/>
            <person name="Albertini A.M."/>
            <person name="Alloni G."/>
            <person name="Azevedo V."/>
            <person name="Bertero M.G."/>
            <person name="Bessieres P."/>
            <person name="Bolotin A."/>
            <person name="Borchert S."/>
            <person name="Borriss R."/>
            <person name="Boursier L."/>
            <person name="Brans A."/>
            <person name="Braun M."/>
            <person name="Brignell S.C."/>
            <person name="Bron S."/>
            <person name="Brouillet S."/>
            <person name="Bruschi C.V."/>
            <person name="Caldwell B."/>
            <person name="Capuano V."/>
            <person name="Carter N.M."/>
            <person name="Choi S.-K."/>
            <person name="Codani J.-J."/>
            <person name="Connerton I.F."/>
            <person name="Cummings N.J."/>
            <person name="Daniel R.A."/>
            <person name="Denizot F."/>
            <person name="Devine K.M."/>
            <person name="Duesterhoeft A."/>
            <person name="Ehrlich S.D."/>
            <person name="Emmerson P.T."/>
            <person name="Entian K.-D."/>
            <person name="Errington J."/>
            <person name="Fabret C."/>
            <person name="Ferrari E."/>
            <person name="Foulger D."/>
            <person name="Fritz C."/>
            <person name="Fujita M."/>
            <person name="Fujita Y."/>
            <person name="Fuma S."/>
            <person name="Galizzi A."/>
            <person name="Galleron N."/>
            <person name="Ghim S.-Y."/>
            <person name="Glaser P."/>
            <person name="Goffeau A."/>
            <person name="Golightly E.J."/>
            <person name="Grandi G."/>
            <person name="Guiseppi G."/>
            <person name="Guy B.J."/>
            <person name="Haga K."/>
            <person name="Haiech J."/>
            <person name="Harwood C.R."/>
            <person name="Henaut A."/>
            <person name="Hilbert H."/>
            <person name="Holsappel S."/>
            <person name="Hosono S."/>
            <person name="Hullo M.-F."/>
            <person name="Itaya M."/>
            <person name="Jones L.-M."/>
            <person name="Joris B."/>
            <person name="Karamata D."/>
            <person name="Kasahara Y."/>
            <person name="Klaerr-Blanchard M."/>
            <person name="Klein C."/>
            <person name="Kobayashi Y."/>
            <person name="Koetter P."/>
            <person name="Koningstein G."/>
            <person name="Krogh S."/>
            <person name="Kumano M."/>
            <person name="Kurita K."/>
            <person name="Lapidus A."/>
            <person name="Lardinois S."/>
            <person name="Lauber J."/>
            <person name="Lazarevic V."/>
            <person name="Lee S.-M."/>
            <person name="Levine A."/>
            <person name="Liu H."/>
            <person name="Masuda S."/>
            <person name="Mauel C."/>
            <person name="Medigue C."/>
            <person name="Medina N."/>
            <person name="Mellado R.P."/>
            <person name="Mizuno M."/>
            <person name="Moestl D."/>
            <person name="Nakai S."/>
            <person name="Noback M."/>
            <person name="Noone D."/>
            <person name="O'Reilly M."/>
            <person name="Ogawa K."/>
            <person name="Ogiwara A."/>
            <person name="Oudega B."/>
            <person name="Park S.-H."/>
            <person name="Parro V."/>
            <person name="Pohl T.M."/>
            <person name="Portetelle D."/>
            <person name="Porwollik S."/>
            <person name="Prescott A.M."/>
            <person name="Presecan E."/>
            <person name="Pujic P."/>
            <person name="Purnelle B."/>
            <person name="Rapoport G."/>
            <person name="Rey M."/>
            <person name="Reynolds S."/>
            <person name="Rieger M."/>
            <person name="Rivolta C."/>
            <person name="Rocha E."/>
            <person name="Roche B."/>
            <person name="Rose M."/>
            <person name="Sadaie Y."/>
            <person name="Sato T."/>
            <person name="Scanlan E."/>
            <person name="Schleich S."/>
            <person name="Schroeter R."/>
            <person name="Scoffone F."/>
            <person name="Sekiguchi J."/>
            <person name="Sekowska A."/>
            <person name="Seror S.J."/>
            <person name="Serror P."/>
            <person name="Shin B.-S."/>
            <person name="Soldo B."/>
            <person name="Sorokin A."/>
            <person name="Tacconi E."/>
            <person name="Takagi T."/>
            <person name="Takahashi H."/>
            <person name="Takemaru K."/>
            <person name="Takeuchi M."/>
            <person name="Tamakoshi A."/>
            <person name="Tanaka T."/>
            <person name="Terpstra P."/>
            <person name="Tognoni A."/>
            <person name="Tosato V."/>
            <person name="Uchiyama S."/>
            <person name="Vandenbol M."/>
            <person name="Vannier F."/>
            <person name="Vassarotti A."/>
            <person name="Viari A."/>
            <person name="Wambutt R."/>
            <person name="Wedler E."/>
            <person name="Wedler H."/>
            <person name="Weitzenegger T."/>
            <person name="Winters P."/>
            <person name="Wipat A."/>
            <person name="Yamamoto H."/>
            <person name="Yamane K."/>
            <person name="Yasumoto K."/>
            <person name="Yata K."/>
            <person name="Yoshida K."/>
            <person name="Yoshikawa H.-F."/>
            <person name="Zumstein E."/>
            <person name="Yoshikawa H."/>
            <person name="Danchin A."/>
        </authorList>
    </citation>
    <scope>NUCLEOTIDE SEQUENCE [LARGE SCALE GENOMIC DNA]</scope>
    <source>
        <strain>168</strain>
    </source>
</reference>
<reference key="3">
    <citation type="journal article" date="2001" name="J. Bacteriol.">
        <title>Comprehensive DNA microarray analysis of Bacillus subtilis two-component regulatory systems.</title>
        <authorList>
            <person name="Kobayashi K."/>
            <person name="Ogura M."/>
            <person name="Yamaguchi H."/>
            <person name="Yoshida K."/>
            <person name="Ogasawara N."/>
            <person name="Tanaka T."/>
            <person name="Fujita Y."/>
        </authorList>
    </citation>
    <scope>FUNCTION</scope>
</reference>
<evidence type="ECO:0000250" key="1"/>
<evidence type="ECO:0000255" key="2">
    <source>
        <dbReference type="PROSITE-ProRule" id="PRU00169"/>
    </source>
</evidence>
<evidence type="ECO:0000255" key="3">
    <source>
        <dbReference type="PROSITE-ProRule" id="PRU00411"/>
    </source>
</evidence>
<evidence type="ECO:0000269" key="4">
    <source>
    </source>
</evidence>
<evidence type="ECO:0000305" key="5"/>
<dbReference type="EMBL" id="Z94043">
    <property type="protein sequence ID" value="CAB07991.1"/>
    <property type="molecule type" value="Genomic_DNA"/>
</dbReference>
<dbReference type="EMBL" id="AL009126">
    <property type="protein sequence ID" value="CAB15411.1"/>
    <property type="molecule type" value="Genomic_DNA"/>
</dbReference>
<dbReference type="PIR" id="D70039">
    <property type="entry name" value="D70039"/>
</dbReference>
<dbReference type="RefSeq" id="NP_391286.1">
    <property type="nucleotide sequence ID" value="NC_000964.3"/>
</dbReference>
<dbReference type="RefSeq" id="WP_003228302.1">
    <property type="nucleotide sequence ID" value="NZ_OZ025638.1"/>
</dbReference>
<dbReference type="SMR" id="O07019"/>
<dbReference type="FunCoup" id="O07019">
    <property type="interactions" value="151"/>
</dbReference>
<dbReference type="STRING" id="224308.BSU34060"/>
<dbReference type="PaxDb" id="224308-BSU34060"/>
<dbReference type="EnsemblBacteria" id="CAB15411">
    <property type="protein sequence ID" value="CAB15411"/>
    <property type="gene ID" value="BSU_34060"/>
</dbReference>
<dbReference type="GeneID" id="938523"/>
<dbReference type="KEGG" id="bsu:BSU34060"/>
<dbReference type="PATRIC" id="fig|224308.179.peg.3692"/>
<dbReference type="eggNOG" id="COG2197">
    <property type="taxonomic scope" value="Bacteria"/>
</dbReference>
<dbReference type="InParanoid" id="O07019"/>
<dbReference type="OrthoDB" id="9780153at2"/>
<dbReference type="PhylomeDB" id="O07019"/>
<dbReference type="BioCyc" id="BSUB:BSU34060-MONOMER"/>
<dbReference type="Proteomes" id="UP000001570">
    <property type="component" value="Chromosome"/>
</dbReference>
<dbReference type="GO" id="GO:0005737">
    <property type="term" value="C:cytoplasm"/>
    <property type="evidence" value="ECO:0007669"/>
    <property type="project" value="UniProtKB-SubCell"/>
</dbReference>
<dbReference type="GO" id="GO:0003677">
    <property type="term" value="F:DNA binding"/>
    <property type="evidence" value="ECO:0007669"/>
    <property type="project" value="UniProtKB-KW"/>
</dbReference>
<dbReference type="GO" id="GO:0000160">
    <property type="term" value="P:phosphorelay signal transduction system"/>
    <property type="evidence" value="ECO:0007669"/>
    <property type="project" value="UniProtKB-KW"/>
</dbReference>
<dbReference type="GO" id="GO:0006355">
    <property type="term" value="P:regulation of DNA-templated transcription"/>
    <property type="evidence" value="ECO:0007669"/>
    <property type="project" value="InterPro"/>
</dbReference>
<dbReference type="CDD" id="cd06170">
    <property type="entry name" value="LuxR_C_like"/>
    <property type="match status" value="1"/>
</dbReference>
<dbReference type="CDD" id="cd19930">
    <property type="entry name" value="REC_DesR-like"/>
    <property type="match status" value="1"/>
</dbReference>
<dbReference type="Gene3D" id="3.40.50.2300">
    <property type="match status" value="1"/>
</dbReference>
<dbReference type="InterPro" id="IPR011006">
    <property type="entry name" value="CheY-like_superfamily"/>
</dbReference>
<dbReference type="InterPro" id="IPR016032">
    <property type="entry name" value="Sig_transdc_resp-reg_C-effctor"/>
</dbReference>
<dbReference type="InterPro" id="IPR001789">
    <property type="entry name" value="Sig_transdc_resp-reg_receiver"/>
</dbReference>
<dbReference type="InterPro" id="IPR000792">
    <property type="entry name" value="Tscrpt_reg_LuxR_C"/>
</dbReference>
<dbReference type="InterPro" id="IPR039420">
    <property type="entry name" value="WalR-like"/>
</dbReference>
<dbReference type="PANTHER" id="PTHR43214:SF42">
    <property type="entry name" value="TRANSCRIPTIONAL REGULATORY PROTEIN DESR"/>
    <property type="match status" value="1"/>
</dbReference>
<dbReference type="PANTHER" id="PTHR43214">
    <property type="entry name" value="TWO-COMPONENT RESPONSE REGULATOR"/>
    <property type="match status" value="1"/>
</dbReference>
<dbReference type="Pfam" id="PF00196">
    <property type="entry name" value="GerE"/>
    <property type="match status" value="1"/>
</dbReference>
<dbReference type="Pfam" id="PF00072">
    <property type="entry name" value="Response_reg"/>
    <property type="match status" value="1"/>
</dbReference>
<dbReference type="PRINTS" id="PR00038">
    <property type="entry name" value="HTHLUXR"/>
</dbReference>
<dbReference type="SMART" id="SM00421">
    <property type="entry name" value="HTH_LUXR"/>
    <property type="match status" value="1"/>
</dbReference>
<dbReference type="SMART" id="SM00448">
    <property type="entry name" value="REC"/>
    <property type="match status" value="1"/>
</dbReference>
<dbReference type="SUPFAM" id="SSF46894">
    <property type="entry name" value="C-terminal effector domain of the bipartite response regulators"/>
    <property type="match status" value="1"/>
</dbReference>
<dbReference type="SUPFAM" id="SSF52172">
    <property type="entry name" value="CheY-like"/>
    <property type="match status" value="1"/>
</dbReference>
<dbReference type="PROSITE" id="PS50043">
    <property type="entry name" value="HTH_LUXR_2"/>
    <property type="match status" value="1"/>
</dbReference>
<dbReference type="PROSITE" id="PS50110">
    <property type="entry name" value="RESPONSE_REGULATORY"/>
    <property type="match status" value="1"/>
</dbReference>
<proteinExistence type="inferred from homology"/>
<organism>
    <name type="scientific">Bacillus subtilis (strain 168)</name>
    <dbReference type="NCBI Taxonomy" id="224308"/>
    <lineage>
        <taxon>Bacteria</taxon>
        <taxon>Bacillati</taxon>
        <taxon>Bacillota</taxon>
        <taxon>Bacilli</taxon>
        <taxon>Bacillales</taxon>
        <taxon>Bacillaceae</taxon>
        <taxon>Bacillus</taxon>
    </lineage>
</organism>
<keyword id="KW-0963">Cytoplasm</keyword>
<keyword id="KW-0238">DNA-binding</keyword>
<keyword id="KW-0597">Phosphoprotein</keyword>
<keyword id="KW-1185">Reference proteome</keyword>
<keyword id="KW-0804">Transcription</keyword>
<keyword id="KW-0805">Transcription regulation</keyword>
<keyword id="KW-0902">Two-component regulatory system</keyword>
<protein>
    <recommendedName>
        <fullName>Uncharacterized transcriptional regulatory protein YvfU</fullName>
    </recommendedName>
</protein>
<sequence length="200" mass="22323">MIRLFIAEDQRMLLGALGSLLDLEEDMTVIGQALNGEEALHAILKLEPDVCIMDIEMPVRSGLNVAEELMKKGCVSKVIILTTFARPGYFERAVKAGAHGYLLKDGEIDDLADAIRKCVKGKRVFSPELTFNMMRDENPLTVREQEILRLAALGKTTKDITLELYLSQGTVRNYISEIIQKLNAKNRTEAASIAEEKGWI</sequence>